<sequence length="88" mass="10316">MDGFDKTMKFSIQDEKQSVHVNDVLLTVYDALQEKGYNPINQIVGYLLSGDPAYIPRHKDARSIVRKLERDEIIEELVKSYLKHHREE</sequence>
<reference key="1">
    <citation type="journal article" date="2008" name="Chem. Biol. Interact.">
        <title>Extending the Bacillus cereus group genomics to putative food-borne pathogens of different toxicity.</title>
        <authorList>
            <person name="Lapidus A."/>
            <person name="Goltsman E."/>
            <person name="Auger S."/>
            <person name="Galleron N."/>
            <person name="Segurens B."/>
            <person name="Dossat C."/>
            <person name="Land M.L."/>
            <person name="Broussolle V."/>
            <person name="Brillard J."/>
            <person name="Guinebretiere M.-H."/>
            <person name="Sanchis V."/>
            <person name="Nguen-the C."/>
            <person name="Lereclus D."/>
            <person name="Richardson P."/>
            <person name="Wincker P."/>
            <person name="Weissenbach J."/>
            <person name="Ehrlich S.D."/>
            <person name="Sorokin A."/>
        </authorList>
    </citation>
    <scope>NUCLEOTIDE SEQUENCE [LARGE SCALE GENOMIC DNA]</scope>
    <source>
        <strain>KBAB4</strain>
    </source>
</reference>
<feature type="chain" id="PRO_1000198230" description="UPF0297 protein BcerKBAB4_4234">
    <location>
        <begin position="1"/>
        <end position="88"/>
    </location>
</feature>
<evidence type="ECO:0000255" key="1">
    <source>
        <dbReference type="HAMAP-Rule" id="MF_01507"/>
    </source>
</evidence>
<protein>
    <recommendedName>
        <fullName evidence="1">UPF0297 protein BcerKBAB4_4234</fullName>
    </recommendedName>
</protein>
<name>Y4234_BACMK</name>
<gene>
    <name type="ordered locus">BcerKBAB4_4234</name>
</gene>
<comment type="similarity">
    <text evidence="1">Belongs to the UPF0297 family.</text>
</comment>
<proteinExistence type="inferred from homology"/>
<accession>A9VI08</accession>
<organism>
    <name type="scientific">Bacillus mycoides (strain KBAB4)</name>
    <name type="common">Bacillus weihenstephanensis</name>
    <dbReference type="NCBI Taxonomy" id="315730"/>
    <lineage>
        <taxon>Bacteria</taxon>
        <taxon>Bacillati</taxon>
        <taxon>Bacillota</taxon>
        <taxon>Bacilli</taxon>
        <taxon>Bacillales</taxon>
        <taxon>Bacillaceae</taxon>
        <taxon>Bacillus</taxon>
        <taxon>Bacillus cereus group</taxon>
    </lineage>
</organism>
<dbReference type="EMBL" id="CP000903">
    <property type="protein sequence ID" value="ABY45393.1"/>
    <property type="molecule type" value="Genomic_DNA"/>
</dbReference>
<dbReference type="RefSeq" id="WP_000348591.1">
    <property type="nucleotide sequence ID" value="NC_010184.1"/>
</dbReference>
<dbReference type="SMR" id="A9VI08"/>
<dbReference type="KEGG" id="bwe:BcerKBAB4_4234"/>
<dbReference type="eggNOG" id="COG4472">
    <property type="taxonomic scope" value="Bacteria"/>
</dbReference>
<dbReference type="HOGENOM" id="CLU_162466_0_0_9"/>
<dbReference type="Proteomes" id="UP000002154">
    <property type="component" value="Chromosome"/>
</dbReference>
<dbReference type="HAMAP" id="MF_01507">
    <property type="entry name" value="UPF0297"/>
    <property type="match status" value="1"/>
</dbReference>
<dbReference type="InterPro" id="IPR009309">
    <property type="entry name" value="IreB"/>
</dbReference>
<dbReference type="NCBIfam" id="NF003997">
    <property type="entry name" value="PRK05473.1"/>
    <property type="match status" value="1"/>
</dbReference>
<dbReference type="PANTHER" id="PTHR40067">
    <property type="entry name" value="UPF0297 PROTEIN YRZL"/>
    <property type="match status" value="1"/>
</dbReference>
<dbReference type="PANTHER" id="PTHR40067:SF1">
    <property type="entry name" value="UPF0297 PROTEIN YRZL"/>
    <property type="match status" value="1"/>
</dbReference>
<dbReference type="Pfam" id="PF06135">
    <property type="entry name" value="IreB"/>
    <property type="match status" value="1"/>
</dbReference>
<dbReference type="PIRSF" id="PIRSF037258">
    <property type="entry name" value="DUF965_bac"/>
    <property type="match status" value="1"/>
</dbReference>